<sequence>MSACQSPIIVALDFPTREAALALADQLDPKLCRVKVGKELFTSCAAGIVEILRDKGFEVFLDLKFHDIPNTTAMAVKAAAEMGVWMVNVHCSGGLRMMAACRETLEAFNGPKPLLIGVTVLTSMEREDLAGIGLDIEPQEQVLRLAALAEKAGMDGLVCSAQEAPALKGAHPRLQLVTPGIRPAGSAQDDQRRILTPRQALDAGSDYLVIGRPISQAADPAKALAAIVAELG</sequence>
<accession>A6V3L5</accession>
<protein>
    <recommendedName>
        <fullName evidence="1">Orotidine 5'-phosphate decarboxylase</fullName>
        <ecNumber evidence="1">4.1.1.23</ecNumber>
    </recommendedName>
    <alternativeName>
        <fullName evidence="1">OMP decarboxylase</fullName>
        <shortName evidence="1">OMPDCase</shortName>
        <shortName evidence="1">OMPdecase</shortName>
    </alternativeName>
</protein>
<dbReference type="EC" id="4.1.1.23" evidence="1"/>
<dbReference type="EMBL" id="CP000744">
    <property type="protein sequence ID" value="ABR82171.1"/>
    <property type="molecule type" value="Genomic_DNA"/>
</dbReference>
<dbReference type="RefSeq" id="WP_012075238.1">
    <property type="nucleotide sequence ID" value="NC_009656.1"/>
</dbReference>
<dbReference type="SMR" id="A6V3L5"/>
<dbReference type="GeneID" id="77220620"/>
<dbReference type="KEGG" id="pap:PSPA7_2278"/>
<dbReference type="HOGENOM" id="CLU_067069_0_0_6"/>
<dbReference type="UniPathway" id="UPA00070">
    <property type="reaction ID" value="UER00120"/>
</dbReference>
<dbReference type="Proteomes" id="UP000001582">
    <property type="component" value="Chromosome"/>
</dbReference>
<dbReference type="GO" id="GO:0005829">
    <property type="term" value="C:cytosol"/>
    <property type="evidence" value="ECO:0007669"/>
    <property type="project" value="TreeGrafter"/>
</dbReference>
<dbReference type="GO" id="GO:0004590">
    <property type="term" value="F:orotidine-5'-phosphate decarboxylase activity"/>
    <property type="evidence" value="ECO:0007669"/>
    <property type="project" value="UniProtKB-UniRule"/>
</dbReference>
<dbReference type="GO" id="GO:0006207">
    <property type="term" value="P:'de novo' pyrimidine nucleobase biosynthetic process"/>
    <property type="evidence" value="ECO:0007669"/>
    <property type="project" value="InterPro"/>
</dbReference>
<dbReference type="GO" id="GO:0044205">
    <property type="term" value="P:'de novo' UMP biosynthetic process"/>
    <property type="evidence" value="ECO:0007669"/>
    <property type="project" value="UniProtKB-UniRule"/>
</dbReference>
<dbReference type="CDD" id="cd04725">
    <property type="entry name" value="OMP_decarboxylase_like"/>
    <property type="match status" value="1"/>
</dbReference>
<dbReference type="FunFam" id="3.20.20.70:FF:000015">
    <property type="entry name" value="Orotidine 5'-phosphate decarboxylase"/>
    <property type="match status" value="1"/>
</dbReference>
<dbReference type="Gene3D" id="3.20.20.70">
    <property type="entry name" value="Aldolase class I"/>
    <property type="match status" value="1"/>
</dbReference>
<dbReference type="HAMAP" id="MF_01200_B">
    <property type="entry name" value="OMPdecase_type1_B"/>
    <property type="match status" value="1"/>
</dbReference>
<dbReference type="InterPro" id="IPR013785">
    <property type="entry name" value="Aldolase_TIM"/>
</dbReference>
<dbReference type="InterPro" id="IPR014732">
    <property type="entry name" value="OMPdecase"/>
</dbReference>
<dbReference type="InterPro" id="IPR018089">
    <property type="entry name" value="OMPdecase_AS"/>
</dbReference>
<dbReference type="InterPro" id="IPR047596">
    <property type="entry name" value="OMPdecase_bac"/>
</dbReference>
<dbReference type="InterPro" id="IPR001754">
    <property type="entry name" value="OMPdeCOase_dom"/>
</dbReference>
<dbReference type="InterPro" id="IPR011060">
    <property type="entry name" value="RibuloseP-bd_barrel"/>
</dbReference>
<dbReference type="NCBIfam" id="NF001273">
    <property type="entry name" value="PRK00230.1"/>
    <property type="match status" value="1"/>
</dbReference>
<dbReference type="NCBIfam" id="TIGR01740">
    <property type="entry name" value="pyrF"/>
    <property type="match status" value="1"/>
</dbReference>
<dbReference type="PANTHER" id="PTHR32119">
    <property type="entry name" value="OROTIDINE 5'-PHOSPHATE DECARBOXYLASE"/>
    <property type="match status" value="1"/>
</dbReference>
<dbReference type="PANTHER" id="PTHR32119:SF2">
    <property type="entry name" value="OROTIDINE 5'-PHOSPHATE DECARBOXYLASE"/>
    <property type="match status" value="1"/>
</dbReference>
<dbReference type="Pfam" id="PF00215">
    <property type="entry name" value="OMPdecase"/>
    <property type="match status" value="1"/>
</dbReference>
<dbReference type="SMART" id="SM00934">
    <property type="entry name" value="OMPdecase"/>
    <property type="match status" value="1"/>
</dbReference>
<dbReference type="SUPFAM" id="SSF51366">
    <property type="entry name" value="Ribulose-phoshate binding barrel"/>
    <property type="match status" value="1"/>
</dbReference>
<dbReference type="PROSITE" id="PS00156">
    <property type="entry name" value="OMPDECASE"/>
    <property type="match status" value="1"/>
</dbReference>
<proteinExistence type="inferred from homology"/>
<reference key="1">
    <citation type="submission" date="2007-06" db="EMBL/GenBank/DDBJ databases">
        <authorList>
            <person name="Dodson R.J."/>
            <person name="Harkins D."/>
            <person name="Paulsen I.T."/>
        </authorList>
    </citation>
    <scope>NUCLEOTIDE SEQUENCE [LARGE SCALE GENOMIC DNA]</scope>
    <source>
        <strain>DSM 24068 / PA7</strain>
    </source>
</reference>
<comment type="function">
    <text evidence="1">Catalyzes the decarboxylation of orotidine 5'-monophosphate (OMP) to uridine 5'-monophosphate (UMP).</text>
</comment>
<comment type="catalytic activity">
    <reaction evidence="1">
        <text>orotidine 5'-phosphate + H(+) = UMP + CO2</text>
        <dbReference type="Rhea" id="RHEA:11596"/>
        <dbReference type="ChEBI" id="CHEBI:15378"/>
        <dbReference type="ChEBI" id="CHEBI:16526"/>
        <dbReference type="ChEBI" id="CHEBI:57538"/>
        <dbReference type="ChEBI" id="CHEBI:57865"/>
        <dbReference type="EC" id="4.1.1.23"/>
    </reaction>
</comment>
<comment type="pathway">
    <text evidence="1">Pyrimidine metabolism; UMP biosynthesis via de novo pathway; UMP from orotate: step 2/2.</text>
</comment>
<comment type="subunit">
    <text evidence="1">Homodimer.</text>
</comment>
<comment type="similarity">
    <text evidence="1">Belongs to the OMP decarboxylase family. Type 1 subfamily.</text>
</comment>
<organism>
    <name type="scientific">Pseudomonas paraeruginosa (strain DSM 24068 / PA7)</name>
    <name type="common">Pseudomonas aeruginosa (strain PA7)</name>
    <dbReference type="NCBI Taxonomy" id="381754"/>
    <lineage>
        <taxon>Bacteria</taxon>
        <taxon>Pseudomonadati</taxon>
        <taxon>Pseudomonadota</taxon>
        <taxon>Gammaproteobacteria</taxon>
        <taxon>Pseudomonadales</taxon>
        <taxon>Pseudomonadaceae</taxon>
        <taxon>Pseudomonas</taxon>
        <taxon>Pseudomonas paraeruginosa</taxon>
    </lineage>
</organism>
<feature type="chain" id="PRO_1000065932" description="Orotidine 5'-phosphate decarboxylase">
    <location>
        <begin position="1"/>
        <end position="232"/>
    </location>
</feature>
<feature type="active site" description="Proton donor" evidence="1">
    <location>
        <position position="64"/>
    </location>
</feature>
<feature type="binding site" evidence="1">
    <location>
        <position position="13"/>
    </location>
    <ligand>
        <name>substrate</name>
    </ligand>
</feature>
<feature type="binding site" evidence="1">
    <location>
        <position position="35"/>
    </location>
    <ligand>
        <name>substrate</name>
    </ligand>
</feature>
<feature type="binding site" evidence="1">
    <location>
        <begin position="62"/>
        <end position="71"/>
    </location>
    <ligand>
        <name>substrate</name>
    </ligand>
</feature>
<feature type="binding site" evidence="1">
    <location>
        <position position="122"/>
    </location>
    <ligand>
        <name>substrate</name>
    </ligand>
</feature>
<feature type="binding site" evidence="1">
    <location>
        <position position="182"/>
    </location>
    <ligand>
        <name>substrate</name>
    </ligand>
</feature>
<feature type="binding site" evidence="1">
    <location>
        <position position="191"/>
    </location>
    <ligand>
        <name>substrate</name>
    </ligand>
</feature>
<feature type="binding site" evidence="1">
    <location>
        <position position="211"/>
    </location>
    <ligand>
        <name>substrate</name>
    </ligand>
</feature>
<feature type="binding site" evidence="1">
    <location>
        <position position="212"/>
    </location>
    <ligand>
        <name>substrate</name>
    </ligand>
</feature>
<evidence type="ECO:0000255" key="1">
    <source>
        <dbReference type="HAMAP-Rule" id="MF_01200"/>
    </source>
</evidence>
<keyword id="KW-0210">Decarboxylase</keyword>
<keyword id="KW-0456">Lyase</keyword>
<keyword id="KW-0665">Pyrimidine biosynthesis</keyword>
<gene>
    <name evidence="1" type="primary">pyrF</name>
    <name type="ordered locus">PSPA7_2278</name>
</gene>
<name>PYRF_PSEP7</name>